<protein>
    <recommendedName>
        <fullName>Uncharacterized protein AF_1758</fullName>
    </recommendedName>
</protein>
<reference key="1">
    <citation type="journal article" date="1997" name="Nature">
        <title>The complete genome sequence of the hyperthermophilic, sulphate-reducing archaeon Archaeoglobus fulgidus.</title>
        <authorList>
            <person name="Klenk H.-P."/>
            <person name="Clayton R.A."/>
            <person name="Tomb J.-F."/>
            <person name="White O."/>
            <person name="Nelson K.E."/>
            <person name="Ketchum K.A."/>
            <person name="Dodson R.J."/>
            <person name="Gwinn M.L."/>
            <person name="Hickey E.K."/>
            <person name="Peterson J.D."/>
            <person name="Richardson D.L."/>
            <person name="Kerlavage A.R."/>
            <person name="Graham D.E."/>
            <person name="Kyrpides N.C."/>
            <person name="Fleischmann R.D."/>
            <person name="Quackenbush J."/>
            <person name="Lee N.H."/>
            <person name="Sutton G.G."/>
            <person name="Gill S.R."/>
            <person name="Kirkness E.F."/>
            <person name="Dougherty B.A."/>
            <person name="McKenney K."/>
            <person name="Adams M.D."/>
            <person name="Loftus B.J."/>
            <person name="Peterson S.N."/>
            <person name="Reich C.I."/>
            <person name="McNeil L.K."/>
            <person name="Badger J.H."/>
            <person name="Glodek A."/>
            <person name="Zhou L."/>
            <person name="Overbeek R."/>
            <person name="Gocayne J.D."/>
            <person name="Weidman J.F."/>
            <person name="McDonald L.A."/>
            <person name="Utterback T.R."/>
            <person name="Cotton M.D."/>
            <person name="Spriggs T."/>
            <person name="Artiach P."/>
            <person name="Kaine B.P."/>
            <person name="Sykes S.M."/>
            <person name="Sadow P.W."/>
            <person name="D'Andrea K.P."/>
            <person name="Bowman C."/>
            <person name="Fujii C."/>
            <person name="Garland S.A."/>
            <person name="Mason T.M."/>
            <person name="Olsen G.J."/>
            <person name="Fraser C.M."/>
            <person name="Smith H.O."/>
            <person name="Woese C.R."/>
            <person name="Venter J.C."/>
        </authorList>
    </citation>
    <scope>NUCLEOTIDE SEQUENCE [LARGE SCALE GENOMIC DNA]</scope>
    <source>
        <strain>ATCC 49558 / DSM 4304 / JCM 9628 / NBRC 100126 / VC-16</strain>
    </source>
</reference>
<gene>
    <name type="ordered locus">AF_1758</name>
</gene>
<feature type="chain" id="PRO_0000128055" description="Uncharacterized protein AF_1758">
    <location>
        <begin position="1"/>
        <end position="193"/>
    </location>
</feature>
<keyword id="KW-1185">Reference proteome</keyword>
<dbReference type="EMBL" id="AE000782">
    <property type="protein sequence ID" value="AAB89492.1"/>
    <property type="molecule type" value="Genomic_DNA"/>
</dbReference>
<dbReference type="PIR" id="E69469">
    <property type="entry name" value="E69469"/>
</dbReference>
<dbReference type="STRING" id="224325.AF_1758"/>
<dbReference type="PaxDb" id="224325-AF_1758"/>
<dbReference type="EnsemblBacteria" id="AAB89492">
    <property type="protein sequence ID" value="AAB89492"/>
    <property type="gene ID" value="AF_1758"/>
</dbReference>
<dbReference type="KEGG" id="afu:AF_1758"/>
<dbReference type="eggNOG" id="arCOG06142">
    <property type="taxonomic scope" value="Archaea"/>
</dbReference>
<dbReference type="HOGENOM" id="CLU_1369528_0_0_2"/>
<dbReference type="OrthoDB" id="131113at2157"/>
<dbReference type="Proteomes" id="UP000002199">
    <property type="component" value="Chromosome"/>
</dbReference>
<dbReference type="GO" id="GO:0008234">
    <property type="term" value="F:cysteine-type peptidase activity"/>
    <property type="evidence" value="ECO:0007669"/>
    <property type="project" value="InterPro"/>
</dbReference>
<dbReference type="GO" id="GO:0006508">
    <property type="term" value="P:proteolysis"/>
    <property type="evidence" value="ECO:0007669"/>
    <property type="project" value="InterPro"/>
</dbReference>
<dbReference type="Gene3D" id="3.40.50.1460">
    <property type="match status" value="1"/>
</dbReference>
<dbReference type="InterPro" id="IPR001769">
    <property type="entry name" value="Gingipain"/>
</dbReference>
<dbReference type="Pfam" id="PF01364">
    <property type="entry name" value="Peptidase_C25"/>
    <property type="match status" value="1"/>
</dbReference>
<organism>
    <name type="scientific">Archaeoglobus fulgidus (strain ATCC 49558 / DSM 4304 / JCM 9628 / NBRC 100126 / VC-16)</name>
    <dbReference type="NCBI Taxonomy" id="224325"/>
    <lineage>
        <taxon>Archaea</taxon>
        <taxon>Methanobacteriati</taxon>
        <taxon>Methanobacteriota</taxon>
        <taxon>Archaeoglobi</taxon>
        <taxon>Archaeoglobales</taxon>
        <taxon>Archaeoglobaceae</taxon>
        <taxon>Archaeoglobus</taxon>
    </lineage>
</organism>
<name>Y1758_ARCFU</name>
<proteinExistence type="predicted"/>
<accession>O28516</accession>
<sequence>MNNEVLAYINERLDEAHNYISSIFWVDGVLDYQYSNSDHDFIDHLNSMNPTHTKIVLIHSHGGADGWWIWGSSFLQFKDGSKLYDNEVNRWLNYDGYFIFAGACDSATYDDLGNTFLNKGFDAYFGYTDSVYTVNNARFYSAFFDKGRHLDVTISEARDHAEQQVLSEFGSNSDVVKNKIIGDSSLCLATSDW</sequence>